<proteinExistence type="evidence at protein level"/>
<keyword id="KW-0002">3D-structure</keyword>
<keyword id="KW-0067">ATP-binding</keyword>
<keyword id="KW-0131">Cell cycle</keyword>
<keyword id="KW-0132">Cell division</keyword>
<keyword id="KW-0184">Conjugation</keyword>
<keyword id="KW-0963">Cytoplasm</keyword>
<keyword id="KW-1017">Isopeptide bond</keyword>
<keyword id="KW-0418">Kinase</keyword>
<keyword id="KW-0498">Mitosis</keyword>
<keyword id="KW-0547">Nucleotide-binding</keyword>
<keyword id="KW-0539">Nucleus</keyword>
<keyword id="KW-0574">Periplasm</keyword>
<keyword id="KW-0597">Phosphoprotein</keyword>
<keyword id="KW-1185">Reference proteome</keyword>
<keyword id="KW-0723">Serine/threonine-protein kinase</keyword>
<keyword id="KW-0808">Transferase</keyword>
<keyword id="KW-0832">Ubl conjugation</keyword>
<name>FUS3_YEAST</name>
<protein>
    <recommendedName>
        <fullName>Mitogen-activated protein kinase FUS3</fullName>
        <shortName>MAP kinase FUS3</shortName>
        <ecNumber>2.7.11.24</ecNumber>
    </recommendedName>
</protein>
<dbReference type="EC" id="2.7.11.24"/>
<dbReference type="EMBL" id="M31132">
    <property type="protein sequence ID" value="AAA34613.1"/>
    <property type="molecule type" value="Genomic_DNA"/>
</dbReference>
<dbReference type="EMBL" id="X69572">
    <property type="protein sequence ID" value="CAA49292.1"/>
    <property type="molecule type" value="Genomic_DNA"/>
</dbReference>
<dbReference type="EMBL" id="X68577">
    <property type="protein sequence ID" value="CAA48569.1"/>
    <property type="molecule type" value="Genomic_DNA"/>
</dbReference>
<dbReference type="EMBL" id="Z35777">
    <property type="protein sequence ID" value="CAA84835.1"/>
    <property type="molecule type" value="Genomic_DNA"/>
</dbReference>
<dbReference type="EMBL" id="AY693096">
    <property type="protein sequence ID" value="AAT93115.1"/>
    <property type="molecule type" value="Genomic_DNA"/>
</dbReference>
<dbReference type="EMBL" id="BK006936">
    <property type="protein sequence ID" value="DAA07104.1"/>
    <property type="molecule type" value="Genomic_DNA"/>
</dbReference>
<dbReference type="PIR" id="S28548">
    <property type="entry name" value="S28548"/>
</dbReference>
<dbReference type="RefSeq" id="NP_009537.1">
    <property type="nucleotide sequence ID" value="NM_001178256.1"/>
</dbReference>
<dbReference type="PDB" id="2B9F">
    <property type="method" value="X-ray"/>
    <property type="resolution" value="1.80 A"/>
    <property type="chains" value="A=1-353"/>
</dbReference>
<dbReference type="PDB" id="2B9H">
    <property type="method" value="X-ray"/>
    <property type="resolution" value="1.55 A"/>
    <property type="chains" value="A=1-353"/>
</dbReference>
<dbReference type="PDB" id="2B9I">
    <property type="method" value="X-ray"/>
    <property type="resolution" value="2.50 A"/>
    <property type="chains" value="A=1-353"/>
</dbReference>
<dbReference type="PDB" id="2B9J">
    <property type="method" value="X-ray"/>
    <property type="resolution" value="2.30 A"/>
    <property type="chains" value="A=1-353"/>
</dbReference>
<dbReference type="PDB" id="2F49">
    <property type="method" value="X-ray"/>
    <property type="resolution" value="1.90 A"/>
    <property type="chains" value="A/B=1-353"/>
</dbReference>
<dbReference type="PDB" id="2F9G">
    <property type="method" value="X-ray"/>
    <property type="resolution" value="2.10 A"/>
    <property type="chains" value="A=1-353"/>
</dbReference>
<dbReference type="PDB" id="2FA2">
    <property type="method" value="X-ray"/>
    <property type="resolution" value="2.85 A"/>
    <property type="chains" value="A/B=1-353"/>
</dbReference>
<dbReference type="PDBsum" id="2B9F"/>
<dbReference type="PDBsum" id="2B9H"/>
<dbReference type="PDBsum" id="2B9I"/>
<dbReference type="PDBsum" id="2B9J"/>
<dbReference type="PDBsum" id="2F49"/>
<dbReference type="PDBsum" id="2F9G"/>
<dbReference type="PDBsum" id="2FA2"/>
<dbReference type="SMR" id="P16892"/>
<dbReference type="BioGRID" id="32682">
    <property type="interactions" value="440"/>
</dbReference>
<dbReference type="DIP" id="DIP-714N"/>
<dbReference type="ELM" id="P16892"/>
<dbReference type="FunCoup" id="P16892">
    <property type="interactions" value="895"/>
</dbReference>
<dbReference type="IntAct" id="P16892">
    <property type="interactions" value="39"/>
</dbReference>
<dbReference type="MINT" id="P16892"/>
<dbReference type="STRING" id="4932.YBL016W"/>
<dbReference type="iPTMnet" id="P16892"/>
<dbReference type="PaxDb" id="4932-YBL016W"/>
<dbReference type="PeptideAtlas" id="P16892"/>
<dbReference type="EnsemblFungi" id="YBL016W_mRNA">
    <property type="protein sequence ID" value="YBL016W"/>
    <property type="gene ID" value="YBL016W"/>
</dbReference>
<dbReference type="GeneID" id="852265"/>
<dbReference type="KEGG" id="sce:YBL016W"/>
<dbReference type="AGR" id="SGD:S000000112"/>
<dbReference type="SGD" id="S000000112">
    <property type="gene designation" value="FUS3"/>
</dbReference>
<dbReference type="VEuPathDB" id="FungiDB:YBL016W"/>
<dbReference type="eggNOG" id="KOG0660">
    <property type="taxonomic scope" value="Eukaryota"/>
</dbReference>
<dbReference type="HOGENOM" id="CLU_000288_181_1_1"/>
<dbReference type="InParanoid" id="P16892"/>
<dbReference type="OMA" id="IFDIQRP"/>
<dbReference type="OrthoDB" id="192887at2759"/>
<dbReference type="BioCyc" id="YEAST:G3O-28920-MONOMER"/>
<dbReference type="BRENDA" id="2.7.11.24">
    <property type="organism ID" value="984"/>
</dbReference>
<dbReference type="Reactome" id="R-SCE-110056">
    <property type="pathway name" value="MAPK3 (ERK1) activation"/>
</dbReference>
<dbReference type="Reactome" id="R-SCE-111995">
    <property type="pathway name" value="phospho-PLA2 pathway"/>
</dbReference>
<dbReference type="Reactome" id="R-SCE-112409">
    <property type="pathway name" value="RAF-independent MAPK1/3 activation"/>
</dbReference>
<dbReference type="Reactome" id="R-SCE-112411">
    <property type="pathway name" value="MAPK1 (ERK2) activation"/>
</dbReference>
<dbReference type="Reactome" id="R-SCE-170968">
    <property type="pathway name" value="Frs2-mediated activation"/>
</dbReference>
<dbReference type="Reactome" id="R-SCE-198753">
    <property type="pathway name" value="ERK/MAPK targets"/>
</dbReference>
<dbReference type="Reactome" id="R-SCE-198765">
    <property type="pathway name" value="Signalling to ERK5"/>
</dbReference>
<dbReference type="Reactome" id="R-SCE-202670">
    <property type="pathway name" value="ERKs are inactivated"/>
</dbReference>
<dbReference type="Reactome" id="R-SCE-2559582">
    <property type="pathway name" value="Senescence-Associated Secretory Phenotype (SASP)"/>
</dbReference>
<dbReference type="Reactome" id="R-SCE-3371453">
    <property type="pathway name" value="Regulation of HSF1-mediated heat shock response"/>
</dbReference>
<dbReference type="Reactome" id="R-SCE-375165">
    <property type="pathway name" value="NCAM signaling for neurite out-growth"/>
</dbReference>
<dbReference type="Reactome" id="R-SCE-4086398">
    <property type="pathway name" value="Ca2+ pathway"/>
</dbReference>
<dbReference type="Reactome" id="R-SCE-437239">
    <property type="pathway name" value="Recycling pathway of L1"/>
</dbReference>
<dbReference type="Reactome" id="R-SCE-445144">
    <property type="pathway name" value="Signal transduction by L1"/>
</dbReference>
<dbReference type="Reactome" id="R-SCE-450341">
    <property type="pathway name" value="Activation of the AP-1 family of transcription factors"/>
</dbReference>
<dbReference type="Reactome" id="R-SCE-5673001">
    <property type="pathway name" value="RAF/MAP kinase cascade"/>
</dbReference>
<dbReference type="Reactome" id="R-SCE-5674135">
    <property type="pathway name" value="MAP2K and MAPK activation"/>
</dbReference>
<dbReference type="Reactome" id="R-SCE-5674499">
    <property type="pathway name" value="Negative feedback regulation of MAPK pathway"/>
</dbReference>
<dbReference type="Reactome" id="R-SCE-5675221">
    <property type="pathway name" value="Negative regulation of MAPK pathway"/>
</dbReference>
<dbReference type="Reactome" id="R-SCE-5687128">
    <property type="pathway name" value="MAPK6/MAPK4 signaling"/>
</dbReference>
<dbReference type="Reactome" id="R-SCE-6798695">
    <property type="pathway name" value="Neutrophil degranulation"/>
</dbReference>
<dbReference type="Reactome" id="R-SCE-881907">
    <property type="pathway name" value="Gastrin-CREB signalling pathway via PKC and MAPK"/>
</dbReference>
<dbReference type="Reactome" id="R-SCE-9634635">
    <property type="pathway name" value="Estrogen-stimulated signaling through PRKCZ"/>
</dbReference>
<dbReference type="Reactome" id="R-SCE-9856649">
    <property type="pathway name" value="Transcriptional and post-translational regulation of MITF-M expression and activity"/>
</dbReference>
<dbReference type="BioGRID-ORCS" id="852265">
    <property type="hits" value="8 hits in 13 CRISPR screens"/>
</dbReference>
<dbReference type="CD-CODE" id="A777E0F8">
    <property type="entry name" value="P-body"/>
</dbReference>
<dbReference type="CD-CODE" id="E03F929F">
    <property type="entry name" value="Stress granule"/>
</dbReference>
<dbReference type="EvolutionaryTrace" id="P16892"/>
<dbReference type="PRO" id="PR:P16892"/>
<dbReference type="Proteomes" id="UP000002311">
    <property type="component" value="Chromosome II"/>
</dbReference>
<dbReference type="RNAct" id="P16892">
    <property type="molecule type" value="protein"/>
</dbReference>
<dbReference type="GO" id="GO:0005737">
    <property type="term" value="C:cytoplasm"/>
    <property type="evidence" value="ECO:0000314"/>
    <property type="project" value="SGD"/>
</dbReference>
<dbReference type="GO" id="GO:0010494">
    <property type="term" value="C:cytoplasmic stress granule"/>
    <property type="evidence" value="ECO:0007005"/>
    <property type="project" value="SGD"/>
</dbReference>
<dbReference type="GO" id="GO:0043332">
    <property type="term" value="C:mating projection tip"/>
    <property type="evidence" value="ECO:0000314"/>
    <property type="project" value="SGD"/>
</dbReference>
<dbReference type="GO" id="GO:0005739">
    <property type="term" value="C:mitochondrion"/>
    <property type="evidence" value="ECO:0007005"/>
    <property type="project" value="SGD"/>
</dbReference>
<dbReference type="GO" id="GO:0005634">
    <property type="term" value="C:nucleus"/>
    <property type="evidence" value="ECO:0000314"/>
    <property type="project" value="SGD"/>
</dbReference>
<dbReference type="GO" id="GO:0042597">
    <property type="term" value="C:periplasmic space"/>
    <property type="evidence" value="ECO:0007669"/>
    <property type="project" value="UniProtKB-SubCell"/>
</dbReference>
<dbReference type="GO" id="GO:0005524">
    <property type="term" value="F:ATP binding"/>
    <property type="evidence" value="ECO:0007669"/>
    <property type="project" value="UniProtKB-KW"/>
</dbReference>
<dbReference type="GO" id="GO:0042802">
    <property type="term" value="F:identical protein binding"/>
    <property type="evidence" value="ECO:0000353"/>
    <property type="project" value="IntAct"/>
</dbReference>
<dbReference type="GO" id="GO:0004707">
    <property type="term" value="F:MAP kinase activity"/>
    <property type="evidence" value="ECO:0000314"/>
    <property type="project" value="SGD"/>
</dbReference>
<dbReference type="GO" id="GO:0004672">
    <property type="term" value="F:protein kinase activity"/>
    <property type="evidence" value="ECO:0007005"/>
    <property type="project" value="SGD"/>
</dbReference>
<dbReference type="GO" id="GO:0106310">
    <property type="term" value="F:protein serine kinase activity"/>
    <property type="evidence" value="ECO:0007669"/>
    <property type="project" value="RHEA"/>
</dbReference>
<dbReference type="GO" id="GO:0004674">
    <property type="term" value="F:protein serine/threonine kinase activity"/>
    <property type="evidence" value="ECO:0000318"/>
    <property type="project" value="GO_Central"/>
</dbReference>
<dbReference type="GO" id="GO:0051301">
    <property type="term" value="P:cell division"/>
    <property type="evidence" value="ECO:0007669"/>
    <property type="project" value="UniProtKB-KW"/>
</dbReference>
<dbReference type="GO" id="GO:0035556">
    <property type="term" value="P:intracellular signal transduction"/>
    <property type="evidence" value="ECO:0000318"/>
    <property type="project" value="GO_Central"/>
</dbReference>
<dbReference type="GO" id="GO:0001403">
    <property type="term" value="P:invasive growth in response to glucose limitation"/>
    <property type="evidence" value="ECO:0000315"/>
    <property type="project" value="SGD"/>
</dbReference>
<dbReference type="GO" id="GO:0043409">
    <property type="term" value="P:negative regulation of MAPK cascade"/>
    <property type="evidence" value="ECO:0000353"/>
    <property type="project" value="SGD"/>
</dbReference>
<dbReference type="GO" id="GO:0071507">
    <property type="term" value="P:pheromone response MAPK cascade"/>
    <property type="evidence" value="ECO:0000314"/>
    <property type="project" value="SGD"/>
</dbReference>
<dbReference type="GO" id="GO:0000750">
    <property type="term" value="P:pheromone-dependent signal transduction involved in conjugation with cellular fusion"/>
    <property type="evidence" value="ECO:0000314"/>
    <property type="project" value="SGD"/>
</dbReference>
<dbReference type="GO" id="GO:0046827">
    <property type="term" value="P:positive regulation of protein export from nucleus"/>
    <property type="evidence" value="ECO:0000315"/>
    <property type="project" value="SGD"/>
</dbReference>
<dbReference type="GO" id="GO:0000749">
    <property type="term" value="P:response to pheromone triggering conjugation with cellular fusion"/>
    <property type="evidence" value="ECO:0000314"/>
    <property type="project" value="SGD"/>
</dbReference>
<dbReference type="GO" id="GO:0010526">
    <property type="term" value="P:transposable element silencing"/>
    <property type="evidence" value="ECO:0000315"/>
    <property type="project" value="SGD"/>
</dbReference>
<dbReference type="CDD" id="cd07849">
    <property type="entry name" value="STKc_ERK1_2_like"/>
    <property type="match status" value="1"/>
</dbReference>
<dbReference type="DisProt" id="DP02784"/>
<dbReference type="FunFam" id="1.10.510.10:FF:000206">
    <property type="entry name" value="Mitogen-activated protein kinase"/>
    <property type="match status" value="1"/>
</dbReference>
<dbReference type="FunFam" id="3.30.200.20:FF:000073">
    <property type="entry name" value="Mitogen-activated protein kinase"/>
    <property type="match status" value="1"/>
</dbReference>
<dbReference type="Gene3D" id="3.30.200.20">
    <property type="entry name" value="Phosphorylase Kinase, domain 1"/>
    <property type="match status" value="1"/>
</dbReference>
<dbReference type="Gene3D" id="1.10.510.10">
    <property type="entry name" value="Transferase(Phosphotransferase) domain 1"/>
    <property type="match status" value="1"/>
</dbReference>
<dbReference type="InterPro" id="IPR011009">
    <property type="entry name" value="Kinase-like_dom_sf"/>
</dbReference>
<dbReference type="InterPro" id="IPR050117">
    <property type="entry name" value="MAP_kinase"/>
</dbReference>
<dbReference type="InterPro" id="IPR003527">
    <property type="entry name" value="MAP_kinase_CS"/>
</dbReference>
<dbReference type="InterPro" id="IPR000719">
    <property type="entry name" value="Prot_kinase_dom"/>
</dbReference>
<dbReference type="InterPro" id="IPR017441">
    <property type="entry name" value="Protein_kinase_ATP_BS"/>
</dbReference>
<dbReference type="InterPro" id="IPR008271">
    <property type="entry name" value="Ser/Thr_kinase_AS"/>
</dbReference>
<dbReference type="PANTHER" id="PTHR24055">
    <property type="entry name" value="MITOGEN-ACTIVATED PROTEIN KINASE"/>
    <property type="match status" value="1"/>
</dbReference>
<dbReference type="Pfam" id="PF00069">
    <property type="entry name" value="Pkinase"/>
    <property type="match status" value="1"/>
</dbReference>
<dbReference type="SMART" id="SM00220">
    <property type="entry name" value="S_TKc"/>
    <property type="match status" value="1"/>
</dbReference>
<dbReference type="SUPFAM" id="SSF56112">
    <property type="entry name" value="Protein kinase-like (PK-like)"/>
    <property type="match status" value="1"/>
</dbReference>
<dbReference type="PROSITE" id="PS01351">
    <property type="entry name" value="MAPK"/>
    <property type="match status" value="1"/>
</dbReference>
<dbReference type="PROSITE" id="PS00107">
    <property type="entry name" value="PROTEIN_KINASE_ATP"/>
    <property type="match status" value="1"/>
</dbReference>
<dbReference type="PROSITE" id="PS50011">
    <property type="entry name" value="PROTEIN_KINASE_DOM"/>
    <property type="match status" value="1"/>
</dbReference>
<dbReference type="PROSITE" id="PS00108">
    <property type="entry name" value="PROTEIN_KINASE_ST"/>
    <property type="match status" value="1"/>
</dbReference>
<gene>
    <name type="primary">FUS3</name>
    <name type="synonym">DAC2</name>
    <name type="ordered locus">YBL016W</name>
    <name type="ORF">YBL03.21</name>
    <name type="ORF">YBL0303</name>
</gene>
<evidence type="ECO:0000250" key="1"/>
<evidence type="ECO:0000255" key="2">
    <source>
        <dbReference type="PROSITE-ProRule" id="PRU00159"/>
    </source>
</evidence>
<evidence type="ECO:0000255" key="3">
    <source>
        <dbReference type="PROSITE-ProRule" id="PRU10027"/>
    </source>
</evidence>
<evidence type="ECO:0000269" key="4">
    <source>
    </source>
</evidence>
<evidence type="ECO:0000269" key="5">
    <source>
    </source>
</evidence>
<evidence type="ECO:0000269" key="6">
    <source>
    </source>
</evidence>
<evidence type="ECO:0000269" key="7">
    <source>
    </source>
</evidence>
<evidence type="ECO:0000269" key="8">
    <source>
    </source>
</evidence>
<evidence type="ECO:0000269" key="9">
    <source>
    </source>
</evidence>
<evidence type="ECO:0000269" key="10">
    <source>
    </source>
</evidence>
<evidence type="ECO:0000305" key="11"/>
<evidence type="ECO:0007744" key="12">
    <source>
    </source>
</evidence>
<evidence type="ECO:0007829" key="13">
    <source>
        <dbReference type="PDB" id="2B9F"/>
    </source>
</evidence>
<evidence type="ECO:0007829" key="14">
    <source>
        <dbReference type="PDB" id="2B9H"/>
    </source>
</evidence>
<evidence type="ECO:0007829" key="15">
    <source>
        <dbReference type="PDB" id="2F49"/>
    </source>
</evidence>
<reference key="1">
    <citation type="journal article" date="1990" name="Cell">
        <title>FUS3 encodes a cdc2+/CDC28-related kinase required for the transition from mitosis into conjugation.</title>
        <authorList>
            <person name="Elion E.A."/>
            <person name="Grisafi P.L."/>
            <person name="Fink G.R."/>
        </authorList>
    </citation>
    <scope>NUCLEOTIDE SEQUENCE [GENOMIC DNA]</scope>
</reference>
<reference key="2">
    <citation type="journal article" date="1992" name="Mol. Gen. Genet.">
        <title>The DAC2/FUS3 protein kinase is not essential for transcriptional activation of the mating pheromone response pathway in Saccharomyces cerevisiae.</title>
        <authorList>
            <person name="Fujimura H.A."/>
        </authorList>
    </citation>
    <scope>NUCLEOTIDE SEQUENCE [GENOMIC DNA]</scope>
</reference>
<reference key="3">
    <citation type="journal article" date="1992" name="Yeast">
        <title>An 11.4 kb DNA segment on the left arm of yeast chromosome II carries the carboxypeptidase Y sorting gene PEP1, as well as ACH1, FUS3 and a putative ARS.</title>
        <authorList>
            <person name="van Dyck L."/>
            <person name="Purnelle B."/>
            <person name="Skala J."/>
            <person name="Goffeau A."/>
        </authorList>
    </citation>
    <scope>NUCLEOTIDE SEQUENCE [GENOMIC DNA]</scope>
    <source>
        <strain>ATCC 204508 / S288c</strain>
    </source>
</reference>
<reference key="4">
    <citation type="journal article" date="1994" name="EMBO J.">
        <title>Complete DNA sequence of yeast chromosome II.</title>
        <authorList>
            <person name="Feldmann H."/>
            <person name="Aigle M."/>
            <person name="Aljinovic G."/>
            <person name="Andre B."/>
            <person name="Baclet M.C."/>
            <person name="Barthe C."/>
            <person name="Baur A."/>
            <person name="Becam A.-M."/>
            <person name="Biteau N."/>
            <person name="Boles E."/>
            <person name="Brandt T."/>
            <person name="Brendel M."/>
            <person name="Brueckner M."/>
            <person name="Bussereau F."/>
            <person name="Christiansen C."/>
            <person name="Contreras R."/>
            <person name="Crouzet M."/>
            <person name="Cziepluch C."/>
            <person name="Demolis N."/>
            <person name="Delaveau T."/>
            <person name="Doignon F."/>
            <person name="Domdey H."/>
            <person name="Duesterhus S."/>
            <person name="Dubois E."/>
            <person name="Dujon B."/>
            <person name="El Bakkoury M."/>
            <person name="Entian K.-D."/>
            <person name="Feuermann M."/>
            <person name="Fiers W."/>
            <person name="Fobo G.M."/>
            <person name="Fritz C."/>
            <person name="Gassenhuber J."/>
            <person name="Glansdorff N."/>
            <person name="Goffeau A."/>
            <person name="Grivell L.A."/>
            <person name="de Haan M."/>
            <person name="Hein C."/>
            <person name="Herbert C.J."/>
            <person name="Hollenberg C.P."/>
            <person name="Holmstroem K."/>
            <person name="Jacq C."/>
            <person name="Jacquet M."/>
            <person name="Jauniaux J.-C."/>
            <person name="Jonniaux J.-L."/>
            <person name="Kallesoee T."/>
            <person name="Kiesau P."/>
            <person name="Kirchrath L."/>
            <person name="Koetter P."/>
            <person name="Korol S."/>
            <person name="Liebl S."/>
            <person name="Logghe M."/>
            <person name="Lohan A.J.E."/>
            <person name="Louis E.J."/>
            <person name="Li Z.Y."/>
            <person name="Maat M.J."/>
            <person name="Mallet L."/>
            <person name="Mannhaupt G."/>
            <person name="Messenguy F."/>
            <person name="Miosga T."/>
            <person name="Molemans F."/>
            <person name="Mueller S."/>
            <person name="Nasr F."/>
            <person name="Obermaier B."/>
            <person name="Perea J."/>
            <person name="Pierard A."/>
            <person name="Piravandi E."/>
            <person name="Pohl F.M."/>
            <person name="Pohl T.M."/>
            <person name="Potier S."/>
            <person name="Proft M."/>
            <person name="Purnelle B."/>
            <person name="Ramezani Rad M."/>
            <person name="Rieger M."/>
            <person name="Rose M."/>
            <person name="Schaaff-Gerstenschlaeger I."/>
            <person name="Scherens B."/>
            <person name="Schwarzlose C."/>
            <person name="Skala J."/>
            <person name="Slonimski P.P."/>
            <person name="Smits P.H.M."/>
            <person name="Souciet J.-L."/>
            <person name="Steensma H.Y."/>
            <person name="Stucka R."/>
            <person name="Urrestarazu L.A."/>
            <person name="van der Aart Q.J.M."/>
            <person name="Van Dyck L."/>
            <person name="Vassarotti A."/>
            <person name="Vetter I."/>
            <person name="Vierendeels F."/>
            <person name="Vissers S."/>
            <person name="Wagner G."/>
            <person name="de Wergifosse P."/>
            <person name="Wolfe K.H."/>
            <person name="Zagulski M."/>
            <person name="Zimmermann F.K."/>
            <person name="Mewes H.-W."/>
            <person name="Kleine K."/>
        </authorList>
    </citation>
    <scope>NUCLEOTIDE SEQUENCE [LARGE SCALE GENOMIC DNA]</scope>
    <source>
        <strain>ATCC 204508 / S288c</strain>
    </source>
</reference>
<reference key="5">
    <citation type="journal article" date="2014" name="G3 (Bethesda)">
        <title>The reference genome sequence of Saccharomyces cerevisiae: Then and now.</title>
        <authorList>
            <person name="Engel S.R."/>
            <person name="Dietrich F.S."/>
            <person name="Fisk D.G."/>
            <person name="Binkley G."/>
            <person name="Balakrishnan R."/>
            <person name="Costanzo M.C."/>
            <person name="Dwight S.S."/>
            <person name="Hitz B.C."/>
            <person name="Karra K."/>
            <person name="Nash R.S."/>
            <person name="Weng S."/>
            <person name="Wong E.D."/>
            <person name="Lloyd P."/>
            <person name="Skrzypek M.S."/>
            <person name="Miyasato S.R."/>
            <person name="Simison M."/>
            <person name="Cherry J.M."/>
        </authorList>
    </citation>
    <scope>GENOME REANNOTATION</scope>
    <source>
        <strain>ATCC 204508 / S288c</strain>
    </source>
</reference>
<reference key="6">
    <citation type="journal article" date="2007" name="Genome Res.">
        <title>Approaching a complete repository of sequence-verified protein-encoding clones for Saccharomyces cerevisiae.</title>
        <authorList>
            <person name="Hu Y."/>
            <person name="Rolfs A."/>
            <person name="Bhullar B."/>
            <person name="Murthy T.V.S."/>
            <person name="Zhu C."/>
            <person name="Berger M.F."/>
            <person name="Camargo A.A."/>
            <person name="Kelley F."/>
            <person name="McCarron S."/>
            <person name="Jepson D."/>
            <person name="Richardson A."/>
            <person name="Raphael J."/>
            <person name="Moreira D."/>
            <person name="Taycher E."/>
            <person name="Zuo D."/>
            <person name="Mohr S."/>
            <person name="Kane M.F."/>
            <person name="Williamson J."/>
            <person name="Simpson A.J.G."/>
            <person name="Bulyk M.L."/>
            <person name="Harlow E."/>
            <person name="Marsischky G."/>
            <person name="Kolodner R.D."/>
            <person name="LaBaer J."/>
        </authorList>
    </citation>
    <scope>NUCLEOTIDE SEQUENCE [GENOMIC DNA]</scope>
    <source>
        <strain>ATCC 204508 / S288c</strain>
    </source>
</reference>
<reference key="7">
    <citation type="journal article" date="1992" name="Genes Dev.">
        <title>Signal transduction in Saccharomyces cerevisiae requires tyrosine and threonine phosphorylation of FUS3 and KSS1.</title>
        <authorList>
            <person name="Gartner A."/>
            <person name="Nasmyth K."/>
            <person name="Ammerer G."/>
        </authorList>
    </citation>
    <scope>PHOSPHORYLATION AT THR-180 AND TYR-182</scope>
</reference>
<reference key="8">
    <citation type="journal article" date="1997" name="Cell">
        <title>MAP kinases with distinct inhibitory functions impart signaling specificity during yeast differentiation.</title>
        <authorList>
            <person name="Madhani H.D."/>
            <person name="Styles C.A."/>
            <person name="Fink G.R."/>
        </authorList>
    </citation>
    <scope>FUNCTION</scope>
    <scope>REGULATION OF STE12 ACTIVITY</scope>
</reference>
<reference key="9">
    <citation type="journal article" date="1997" name="Curr. Biol.">
        <title>Regulation of the mating pheromone and invasive growth responses in yeast by two MAP kinase substrates.</title>
        <authorList>
            <person name="Tedford K."/>
            <person name="Kim S."/>
            <person name="Sa D."/>
            <person name="Stevens K."/>
            <person name="Tyers M."/>
        </authorList>
    </citation>
    <scope>FUNCTION</scope>
    <scope>COMPLEX WITH DIG1; DIG2 AND STE12</scope>
</reference>
<reference key="10">
    <citation type="journal article" date="2001" name="Mol. Cell">
        <title>Specificity of MAP kinase signaling in yeast differentiation involves transient versus sustained MAPK activation.</title>
        <authorList>
            <person name="Sabbagh W. Jr."/>
            <person name="Flatauer L.J."/>
            <person name="Bardwell A.J."/>
            <person name="Bardwell L."/>
        </authorList>
    </citation>
    <scope>FUNCTION</scope>
    <scope>REGULATION OF KSS1 ACTIVITY</scope>
</reference>
<reference key="11">
    <citation type="journal article" date="2001" name="Nat. Cell Biol.">
        <title>MAP kinase dynamics in response to pheromones in budding yeast.</title>
        <authorList>
            <person name="van Drogen F."/>
            <person name="Stucke V.M."/>
            <person name="Jorritsma G."/>
            <person name="Peter M."/>
        </authorList>
    </citation>
    <scope>SUBCELLULAR LOCATION</scope>
</reference>
<reference key="12">
    <citation type="journal article" date="2003" name="Cell">
        <title>Program-specific distribution of a transcription factor dependent on partner transcription factor and MAPK signaling.</title>
        <authorList>
            <person name="Zeitlinger J."/>
            <person name="Simon I."/>
            <person name="Harbison C.T."/>
            <person name="Hannett N.M."/>
            <person name="Volkert T.L."/>
            <person name="Fink G.R."/>
            <person name="Young R.A."/>
        </authorList>
    </citation>
    <scope>FUNCTION</scope>
    <scope>REGULATION OF STE12 PROMOTER SELECTIVITY</scope>
</reference>
<reference key="13">
    <citation type="journal article" date="2003" name="Nature">
        <title>Global analysis of protein expression in yeast.</title>
        <authorList>
            <person name="Ghaemmaghami S."/>
            <person name="Huh W.-K."/>
            <person name="Bower K."/>
            <person name="Howson R.W."/>
            <person name="Belle A."/>
            <person name="Dephoure N."/>
            <person name="O'Shea E.K."/>
            <person name="Weissman J.S."/>
        </authorList>
    </citation>
    <scope>LEVEL OF PROTEIN EXPRESSION [LARGE SCALE ANALYSIS]</scope>
</reference>
<reference key="14">
    <citation type="journal article" date="2007" name="J. Proteome Res.">
        <title>Large-scale phosphorylation analysis of alpha-factor-arrested Saccharomyces cerevisiae.</title>
        <authorList>
            <person name="Li X."/>
            <person name="Gerber S.A."/>
            <person name="Rudner A.D."/>
            <person name="Beausoleil S.A."/>
            <person name="Haas W."/>
            <person name="Villen J."/>
            <person name="Elias J.E."/>
            <person name="Gygi S.P."/>
        </authorList>
    </citation>
    <scope>IDENTIFICATION BY MASS SPECTROMETRY [LARGE SCALE ANALYSIS]</scope>
    <source>
        <strain>ADR376</strain>
    </source>
</reference>
<reference key="15">
    <citation type="journal article" date="2008" name="Mol. Cell. Proteomics">
        <title>A multidimensional chromatography technology for in-depth phosphoproteome analysis.</title>
        <authorList>
            <person name="Albuquerque C.P."/>
            <person name="Smolka M.B."/>
            <person name="Payne S.H."/>
            <person name="Bafna V."/>
            <person name="Eng J."/>
            <person name="Zhou H."/>
        </authorList>
    </citation>
    <scope>IDENTIFICATION BY MASS SPECTROMETRY [LARGE SCALE ANALYSIS]</scope>
</reference>
<reference key="16">
    <citation type="journal article" date="2012" name="Proteomics">
        <title>Sites of ubiquitin attachment in Saccharomyces cerevisiae.</title>
        <authorList>
            <person name="Starita L.M."/>
            <person name="Lo R.S."/>
            <person name="Eng J.K."/>
            <person name="von Haller P.D."/>
            <person name="Fields S."/>
        </authorList>
    </citation>
    <scope>UBIQUITINATION [LARGE SCALE ANALYSIS] AT LYS-345</scope>
    <scope>IDENTIFICATION BY MASS SPECTROMETRY [LARGE SCALE ANALYSIS]</scope>
</reference>
<sequence length="353" mass="40772">MPKRIVYNISSDFQLKSLLGEGAYGVVCSATHKPTGEIVAIKKIEPFDKPLFALRTLREIKILKHFKHENIITIFNIQRPDSFENFNEVYIIQELMQTDLHRVISTQMLSDDHIQYFIYQTLRAVKVLHGSNVIHRDLKPSNLLINSNCDLKVCDFGLARIIDESAADNSEPTGQQSGMTEYVATRWYRAPEVMLTSAKYSRAMDVWSCGCILAELFLRRPIFPGRDYRHQLLLIFGIIGTPHSDNDLRCIESPRAREYIKSLPMYPAAPLEKMFPRVNPKGIDLLQRMLVFDPAKRITAKEALEHPYLQTYHDPNDEPEGEPIPPSFFEFDHYKEALTTKDLKKLIWNEIFS</sequence>
<comment type="function">
    <text evidence="4 6 9 10">Together with closely related KSS1, FUS3 is the final kinase in the signal transduction cascade regulating activation/repression of the mating and filamentation pathways, induced by pheromone and nitrogen/carbon limitation, respectively. Phosphorylated FUS3 activates the mating but suppresses the filamentation pathway, whereas activated KSS1 activates both pathways. Pheromone-activated FUS3 functions by inhibiting the binding of the transcriptional activator STE12 to filamentation specific genes while inducing its binding to and activity at mating specific genes. Non-activated FUS3 has a repressive effect on STE12 transcriptional activity. KSS1 can partially compensate for the lack of FUS3 but mating efficiency is reduced and the filamentation program is partially activated upon pheromone signaling. FUS3 phosphorylates STE7, STE5, FAR1, DIG1, DIG2 and STE12.</text>
</comment>
<comment type="catalytic activity">
    <reaction>
        <text>L-seryl-[protein] + ATP = O-phospho-L-seryl-[protein] + ADP + H(+)</text>
        <dbReference type="Rhea" id="RHEA:17989"/>
        <dbReference type="Rhea" id="RHEA-COMP:9863"/>
        <dbReference type="Rhea" id="RHEA-COMP:11604"/>
        <dbReference type="ChEBI" id="CHEBI:15378"/>
        <dbReference type="ChEBI" id="CHEBI:29999"/>
        <dbReference type="ChEBI" id="CHEBI:30616"/>
        <dbReference type="ChEBI" id="CHEBI:83421"/>
        <dbReference type="ChEBI" id="CHEBI:456216"/>
        <dbReference type="EC" id="2.7.11.24"/>
    </reaction>
</comment>
<comment type="catalytic activity">
    <reaction>
        <text>L-threonyl-[protein] + ATP = O-phospho-L-threonyl-[protein] + ADP + H(+)</text>
        <dbReference type="Rhea" id="RHEA:46608"/>
        <dbReference type="Rhea" id="RHEA-COMP:11060"/>
        <dbReference type="Rhea" id="RHEA-COMP:11605"/>
        <dbReference type="ChEBI" id="CHEBI:15378"/>
        <dbReference type="ChEBI" id="CHEBI:30013"/>
        <dbReference type="ChEBI" id="CHEBI:30616"/>
        <dbReference type="ChEBI" id="CHEBI:61977"/>
        <dbReference type="ChEBI" id="CHEBI:456216"/>
        <dbReference type="EC" id="2.7.11.24"/>
    </reaction>
</comment>
<comment type="cofactor">
    <cofactor evidence="1">
        <name>Mg(2+)</name>
        <dbReference type="ChEBI" id="CHEBI:18420"/>
    </cofactor>
</comment>
<comment type="activity regulation">
    <text>Activated by tyrosine and threonine phosphorylation after pheromone treatment.</text>
</comment>
<comment type="subunit">
    <text>In the nucleus, FUS3 forms a complex with DIG1, DIG2 and STE12. The interaction of FUS3 with STE12 depends on the presence of both DIG1 and DIG2. STE12 is lost from FUS3/DIG1/DIG2 complex after pheromone treatment. During its activation and phosphorylation, FUS3 forms a membrane-associated complex with the scaffold protein STE5, the MAPKK STE7, the MAPKKK STE11, and the G-protein beta subunit GBB/STE4; interacting directly with STE7 and STE5.</text>
</comment>
<comment type="interaction">
    <interactant intactId="EBI-7193">
        <id>P16892</id>
    </interactant>
    <interactant intactId="EBI-3480">
        <id>P33306</id>
        <label>BCK2</label>
    </interactant>
    <organismsDiffer>false</organismsDiffer>
    <experiments>2</experiments>
</comment>
<comment type="interaction">
    <interactant intactId="EBI-7193">
        <id>P16892</id>
    </interactant>
    <interactant intactId="EBI-7193">
        <id>P16892</id>
        <label>FUS3</label>
    </interactant>
    <organismsDiffer>false</organismsDiffer>
    <experiments>2</experiments>
</comment>
<comment type="interaction">
    <interactant intactId="EBI-7193">
        <id>P16892</id>
    </interactant>
    <interactant intactId="EBI-9945">
        <id>P14681</id>
        <label>KSS1</label>
    </interactant>
    <organismsDiffer>false</organismsDiffer>
    <experiments>2</experiments>
</comment>
<comment type="interaction">
    <interactant intactId="EBI-7193">
        <id>P16892</id>
    </interactant>
    <interactant intactId="EBI-18259">
        <id>P23561</id>
        <label>STE11</label>
    </interactant>
    <organismsDiffer>false</organismsDiffer>
    <experiments>6</experiments>
</comment>
<comment type="interaction">
    <interactant intactId="EBI-7193">
        <id>P16892</id>
    </interactant>
    <interactant intactId="EBI-18373">
        <id>P32917</id>
        <label>STE5</label>
    </interactant>
    <organismsDiffer>false</organismsDiffer>
    <experiments>11</experiments>
</comment>
<comment type="interaction">
    <interactant intactId="EBI-7193">
        <id>P16892</id>
    </interactant>
    <interactant intactId="EBI-18389">
        <id>P06784</id>
        <label>STE7</label>
    </interactant>
    <organismsDiffer>false</organismsDiffer>
    <experiments>15</experiments>
</comment>
<comment type="interaction">
    <interactant intactId="EBI-7193">
        <id>P16892</id>
    </interactant>
    <interactant intactId="EBI-11303">
        <id>P32830</id>
        <label>TIM12</label>
    </interactant>
    <organismsDiffer>false</organismsDiffer>
    <experiments>2</experiments>
</comment>
<comment type="interaction">
    <interactant intactId="EBI-7193">
        <id>P16892</id>
    </interactant>
    <interactant intactId="EBI-8783719">
        <id>A7TJH8</id>
        <label>Kpol_1061p54</label>
    </interactant>
    <organismsDiffer>true</organismsDiffer>
    <experiments>2</experiments>
</comment>
<comment type="subcellular location">
    <subcellularLocation>
        <location evidence="5">Nucleus</location>
    </subcellularLocation>
    <subcellularLocation>
        <location evidence="5">Cytoplasm</location>
    </subcellularLocation>
    <subcellularLocation>
        <location evidence="5">Periplasm</location>
    </subcellularLocation>
    <text>FUS3 shuttles rapidly between the cytoplasm and the nucleus independent of pheromone treatment or FUS3 phosphorylation level. Activated FUS3 translocates rapidly to the nucleus.</text>
</comment>
<comment type="domain">
    <text>The TXY motif contains the threonine and tyrosine residues whose phosphorylation activates the MAP kinases.</text>
</comment>
<comment type="PTM">
    <text evidence="8">Dually phosphorylated on Thr-180 and Tyr-182 by STE7 in response to pheromone induction, which activates the enzyme. Activated FUS3 initiates a feedback signal, down-regulating phosphorylation of both, FUS3 and KSS1.</text>
</comment>
<comment type="miscellaneous">
    <text evidence="7">Present with 8480 molecules/cell in log phase SD medium.</text>
</comment>
<comment type="similarity">
    <text evidence="11">Belongs to the protein kinase superfamily. CMGC Ser/Thr protein kinase family. MAP kinase subfamily.</text>
</comment>
<organism>
    <name type="scientific">Saccharomyces cerevisiae (strain ATCC 204508 / S288c)</name>
    <name type="common">Baker's yeast</name>
    <dbReference type="NCBI Taxonomy" id="559292"/>
    <lineage>
        <taxon>Eukaryota</taxon>
        <taxon>Fungi</taxon>
        <taxon>Dikarya</taxon>
        <taxon>Ascomycota</taxon>
        <taxon>Saccharomycotina</taxon>
        <taxon>Saccharomycetes</taxon>
        <taxon>Saccharomycetales</taxon>
        <taxon>Saccharomycetaceae</taxon>
        <taxon>Saccharomyces</taxon>
    </lineage>
</organism>
<accession>P16892</accession>
<accession>D6VPY4</accession>
<feature type="chain" id="PRO_0000186326" description="Mitogen-activated protein kinase FUS3">
    <location>
        <begin position="1"/>
        <end position="353"/>
    </location>
</feature>
<feature type="domain" description="Protein kinase" evidence="2">
    <location>
        <begin position="13"/>
        <end position="309"/>
    </location>
</feature>
<feature type="short sequence motif" description="TXY">
    <location>
        <begin position="180"/>
        <end position="182"/>
    </location>
</feature>
<feature type="active site" description="Proton acceptor" evidence="2 3">
    <location>
        <position position="137"/>
    </location>
</feature>
<feature type="binding site" evidence="2">
    <location>
        <begin position="19"/>
        <end position="27"/>
    </location>
    <ligand>
        <name>ATP</name>
        <dbReference type="ChEBI" id="CHEBI:30616"/>
    </ligand>
</feature>
<feature type="binding site" evidence="2">
    <location>
        <position position="42"/>
    </location>
    <ligand>
        <name>ATP</name>
        <dbReference type="ChEBI" id="CHEBI:30616"/>
    </ligand>
</feature>
<feature type="modified residue" description="Phosphothreonine" evidence="8">
    <location>
        <position position="180"/>
    </location>
</feature>
<feature type="modified residue" description="Phosphotyrosine" evidence="8">
    <location>
        <position position="182"/>
    </location>
</feature>
<feature type="cross-link" description="Glycyl lysine isopeptide (Lys-Gly) (interchain with G-Cter in ubiquitin)" evidence="12">
    <location>
        <position position="345"/>
    </location>
</feature>
<feature type="sequence conflict" description="In Ref. 1; AAA34613." evidence="11" ref="1">
    <original>Y</original>
    <variation>H</variation>
    <location>
        <position position="334"/>
    </location>
</feature>
<feature type="strand" evidence="15">
    <location>
        <begin position="4"/>
        <end position="10"/>
    </location>
</feature>
<feature type="strand" evidence="14">
    <location>
        <begin position="13"/>
        <end position="21"/>
    </location>
</feature>
<feature type="strand" evidence="14">
    <location>
        <begin position="23"/>
        <end position="32"/>
    </location>
</feature>
<feature type="turn" evidence="14">
    <location>
        <begin position="33"/>
        <end position="35"/>
    </location>
</feature>
<feature type="strand" evidence="14">
    <location>
        <begin position="38"/>
        <end position="44"/>
    </location>
</feature>
<feature type="helix" evidence="14">
    <location>
        <begin position="50"/>
        <end position="65"/>
    </location>
</feature>
<feature type="strand" evidence="14">
    <location>
        <begin position="74"/>
        <end position="77"/>
    </location>
</feature>
<feature type="turn" evidence="13">
    <location>
        <begin position="83"/>
        <end position="85"/>
    </location>
</feature>
<feature type="strand" evidence="14">
    <location>
        <begin position="89"/>
        <end position="93"/>
    </location>
</feature>
<feature type="strand" evidence="14">
    <location>
        <begin position="97"/>
        <end position="99"/>
    </location>
</feature>
<feature type="helix" evidence="14">
    <location>
        <begin position="100"/>
        <end position="106"/>
    </location>
</feature>
<feature type="helix" evidence="14">
    <location>
        <begin position="111"/>
        <end position="130"/>
    </location>
</feature>
<feature type="helix" evidence="14">
    <location>
        <begin position="140"/>
        <end position="142"/>
    </location>
</feature>
<feature type="strand" evidence="14">
    <location>
        <begin position="143"/>
        <end position="145"/>
    </location>
</feature>
<feature type="strand" evidence="14">
    <location>
        <begin position="151"/>
        <end position="153"/>
    </location>
</feature>
<feature type="helix" evidence="13">
    <location>
        <begin position="156"/>
        <end position="158"/>
    </location>
</feature>
<feature type="strand" evidence="15">
    <location>
        <begin position="182"/>
        <end position="184"/>
    </location>
</feature>
<feature type="helix" evidence="14">
    <location>
        <begin position="186"/>
        <end position="188"/>
    </location>
</feature>
<feature type="helix" evidence="14">
    <location>
        <begin position="191"/>
        <end position="195"/>
    </location>
</feature>
<feature type="helix" evidence="14">
    <location>
        <begin position="202"/>
        <end position="218"/>
    </location>
</feature>
<feature type="helix" evidence="14">
    <location>
        <begin position="228"/>
        <end position="239"/>
    </location>
</feature>
<feature type="turn" evidence="14">
    <location>
        <begin position="245"/>
        <end position="250"/>
    </location>
</feature>
<feature type="helix" evidence="14">
    <location>
        <begin position="254"/>
        <end position="261"/>
    </location>
</feature>
<feature type="helix" evidence="14">
    <location>
        <begin position="271"/>
        <end position="274"/>
    </location>
</feature>
<feature type="helix" evidence="14">
    <location>
        <begin position="280"/>
        <end position="289"/>
    </location>
</feature>
<feature type="helix" evidence="14">
    <location>
        <begin position="294"/>
        <end position="296"/>
    </location>
</feature>
<feature type="helix" evidence="14">
    <location>
        <begin position="300"/>
        <end position="304"/>
    </location>
</feature>
<feature type="helix" evidence="14">
    <location>
        <begin position="307"/>
        <end position="309"/>
    </location>
</feature>
<feature type="turn" evidence="14">
    <location>
        <begin position="310"/>
        <end position="312"/>
    </location>
</feature>
<feature type="helix" evidence="14">
    <location>
        <begin position="326"/>
        <end position="332"/>
    </location>
</feature>
<feature type="helix" evidence="14">
    <location>
        <begin position="340"/>
        <end position="351"/>
    </location>
</feature>